<sequence length="76" mass="9146">MIYKVFYQETKDQSPRRESTKALYLNIDATDELDGRIKARRLVEDNTYYNVEFIELLSDKHLDYEKETGVFELTEF</sequence>
<proteinExistence type="inferred from homology"/>
<protein>
    <recommendedName>
        <fullName evidence="1">DNA-directed RNA polymerase subunit epsilon</fullName>
        <shortName evidence="1">RNAP epsilon subunit</shortName>
        <ecNumber evidence="1">2.7.7.6</ecNumber>
    </recommendedName>
    <alternativeName>
        <fullName evidence="1">RNA polymerase epsilon subunit</fullName>
    </alternativeName>
    <alternativeName>
        <fullName evidence="1">Transcriptase subunit epsilon</fullName>
    </alternativeName>
</protein>
<name>RPOY_STRPZ</name>
<gene>
    <name evidence="1" type="primary">rpoY</name>
    <name type="ordered locus">Spy49_1548</name>
</gene>
<dbReference type="EC" id="2.7.7.6" evidence="1"/>
<dbReference type="EMBL" id="CP000829">
    <property type="protein sequence ID" value="ACI61808.1"/>
    <property type="molecule type" value="Genomic_DNA"/>
</dbReference>
<dbReference type="SMR" id="B5XIE6"/>
<dbReference type="KEGG" id="soz:Spy49_1548"/>
<dbReference type="HOGENOM" id="CLU_187518_0_0_9"/>
<dbReference type="Proteomes" id="UP000001039">
    <property type="component" value="Chromosome"/>
</dbReference>
<dbReference type="GO" id="GO:0000428">
    <property type="term" value="C:DNA-directed RNA polymerase complex"/>
    <property type="evidence" value="ECO:0007669"/>
    <property type="project" value="UniProtKB-KW"/>
</dbReference>
<dbReference type="GO" id="GO:0003677">
    <property type="term" value="F:DNA binding"/>
    <property type="evidence" value="ECO:0007669"/>
    <property type="project" value="UniProtKB-UniRule"/>
</dbReference>
<dbReference type="GO" id="GO:0003899">
    <property type="term" value="F:DNA-directed RNA polymerase activity"/>
    <property type="evidence" value="ECO:0007669"/>
    <property type="project" value="UniProtKB-UniRule"/>
</dbReference>
<dbReference type="GO" id="GO:0006351">
    <property type="term" value="P:DNA-templated transcription"/>
    <property type="evidence" value="ECO:0007669"/>
    <property type="project" value="UniProtKB-UniRule"/>
</dbReference>
<dbReference type="Gene3D" id="3.10.20.730">
    <property type="entry name" value="RNAP, epsilon subunit-like"/>
    <property type="match status" value="1"/>
</dbReference>
<dbReference type="HAMAP" id="MF_01553">
    <property type="entry name" value="RNApol_bact_RpoY"/>
    <property type="match status" value="1"/>
</dbReference>
<dbReference type="InterPro" id="IPR009907">
    <property type="entry name" value="RpoY"/>
</dbReference>
<dbReference type="NCBIfam" id="NF010188">
    <property type="entry name" value="PRK13667.1"/>
    <property type="match status" value="1"/>
</dbReference>
<dbReference type="Pfam" id="PF07288">
    <property type="entry name" value="RpoY"/>
    <property type="match status" value="1"/>
</dbReference>
<feature type="chain" id="PRO_1000199625" description="DNA-directed RNA polymerase subunit epsilon">
    <location>
        <begin position="1"/>
        <end position="76"/>
    </location>
</feature>
<reference key="1">
    <citation type="journal article" date="2008" name="J. Bacteriol.">
        <title>Genome sequence of a nephritogenic and highly transformable M49 strain of Streptococcus pyogenes.</title>
        <authorList>
            <person name="McShan W.M."/>
            <person name="Ferretti J.J."/>
            <person name="Karasawa T."/>
            <person name="Suvorov A.N."/>
            <person name="Lin S."/>
            <person name="Qin B."/>
            <person name="Jia H."/>
            <person name="Kenton S."/>
            <person name="Najar F."/>
            <person name="Wu H."/>
            <person name="Scott J."/>
            <person name="Roe B.A."/>
            <person name="Savic D.J."/>
        </authorList>
    </citation>
    <scope>NUCLEOTIDE SEQUENCE [LARGE SCALE GENOMIC DNA]</scope>
    <source>
        <strain>NZ131</strain>
    </source>
</reference>
<evidence type="ECO:0000255" key="1">
    <source>
        <dbReference type="HAMAP-Rule" id="MF_01553"/>
    </source>
</evidence>
<accession>B5XIE6</accession>
<organism>
    <name type="scientific">Streptococcus pyogenes serotype M49 (strain NZ131)</name>
    <dbReference type="NCBI Taxonomy" id="471876"/>
    <lineage>
        <taxon>Bacteria</taxon>
        <taxon>Bacillati</taxon>
        <taxon>Bacillota</taxon>
        <taxon>Bacilli</taxon>
        <taxon>Lactobacillales</taxon>
        <taxon>Streptococcaceae</taxon>
        <taxon>Streptococcus</taxon>
    </lineage>
</organism>
<comment type="function">
    <text evidence="1">A non-essential component of RNA polymerase (RNAP).</text>
</comment>
<comment type="catalytic activity">
    <reaction evidence="1">
        <text>RNA(n) + a ribonucleoside 5'-triphosphate = RNA(n+1) + diphosphate</text>
        <dbReference type="Rhea" id="RHEA:21248"/>
        <dbReference type="Rhea" id="RHEA-COMP:14527"/>
        <dbReference type="Rhea" id="RHEA-COMP:17342"/>
        <dbReference type="ChEBI" id="CHEBI:33019"/>
        <dbReference type="ChEBI" id="CHEBI:61557"/>
        <dbReference type="ChEBI" id="CHEBI:140395"/>
        <dbReference type="EC" id="2.7.7.6"/>
    </reaction>
</comment>
<comment type="subunit">
    <text evidence="1">RNAP is composed of a core of 2 alpha, a beta and a beta' subunit. The core is associated with a delta subunit, and at least one of epsilon or omega. When a sigma factor is associated with the core the holoenzyme is formed, which can initiate transcription.</text>
</comment>
<comment type="similarity">
    <text evidence="1">Belongs to the RNA polymerase subunit epsilon family.</text>
</comment>
<keyword id="KW-0240">DNA-directed RNA polymerase</keyword>
<keyword id="KW-0548">Nucleotidyltransferase</keyword>
<keyword id="KW-0804">Transcription</keyword>
<keyword id="KW-0808">Transferase</keyword>